<proteinExistence type="inferred from homology"/>
<comment type="function">
    <text evidence="2">Multidrug efflux pump that functions probably as a Na(+)/drug antiporter.</text>
</comment>
<comment type="subcellular location">
    <subcellularLocation>
        <location evidence="2">Cell inner membrane</location>
        <topology evidence="2">Multi-pass membrane protein</topology>
    </subcellularLocation>
</comment>
<comment type="similarity">
    <text evidence="2">Belongs to the multi antimicrobial extrusion (MATE) (TC 2.A.66.1) family. MdtK subfamily.</text>
</comment>
<gene>
    <name evidence="2" type="primary">mdtK</name>
    <name type="ordered locus">SFV_1685</name>
</gene>
<reference key="1">
    <citation type="journal article" date="2006" name="BMC Genomics">
        <title>Complete genome sequence of Shigella flexneri 5b and comparison with Shigella flexneri 2a.</title>
        <authorList>
            <person name="Nie H."/>
            <person name="Yang F."/>
            <person name="Zhang X."/>
            <person name="Yang J."/>
            <person name="Chen L."/>
            <person name="Wang J."/>
            <person name="Xiong Z."/>
            <person name="Peng J."/>
            <person name="Sun L."/>
            <person name="Dong J."/>
            <person name="Xue Y."/>
            <person name="Xu X."/>
            <person name="Chen S."/>
            <person name="Yao Z."/>
            <person name="Shen Y."/>
            <person name="Jin Q."/>
        </authorList>
    </citation>
    <scope>NUCLEOTIDE SEQUENCE [LARGE SCALE GENOMIC DNA]</scope>
    <source>
        <strain>8401</strain>
    </source>
</reference>
<keyword id="KW-0050">Antiport</keyword>
<keyword id="KW-0997">Cell inner membrane</keyword>
<keyword id="KW-1003">Cell membrane</keyword>
<keyword id="KW-0406">Ion transport</keyword>
<keyword id="KW-0472">Membrane</keyword>
<keyword id="KW-0915">Sodium</keyword>
<keyword id="KW-0739">Sodium transport</keyword>
<keyword id="KW-0812">Transmembrane</keyword>
<keyword id="KW-1133">Transmembrane helix</keyword>
<keyword id="KW-0813">Transport</keyword>
<sequence>MQKYISEARLLLALAIPVILAQIAQTAMGFVDTVMAGGYSATDMAAVAIGTSIWLPAILFGHGLLLALTPVIAQLNGSGRRERIAHQVRQGFWLAGFVSVLIMLVLWNAGYIIRYMENIDPALADKAVGYLRALLWGAPGYLFFQVARNQCEGLAKAKPGMVMGFIGLLVNIPVNYIFIYGHFGMPELGGVGCGVATAAVYWVMFLAMVSYIKRARSMRDIRNEKGTAKPEPAVMKRLIQLGLPIALALFLEVTLFAVVALLVSPLGIVDVAGHQIALNFSSLMFVLPMSLAAAVTIRVGYRLGQGSTLDAQTAARTGLMVGVCMATLTAIFTVSLREQIALLYNDNPEVVTLAAHLMLLAAVYQISDSIQVIGSGILRGYKDTRSIFYITFTAYWVLGLPSGYILALTDLVVEPMGPAGFWIGFIIGLTSAAIMMMLRMRFLQRMPSAIILQRASR</sequence>
<feature type="chain" id="PRO_0000279854" description="Multidrug resistance protein MdtK">
    <location>
        <begin position="1"/>
        <end position="457"/>
    </location>
</feature>
<feature type="topological domain" description="Cytoplasmic" evidence="1">
    <location>
        <begin position="1"/>
        <end position="10"/>
    </location>
</feature>
<feature type="transmembrane region" description="Helical" evidence="2">
    <location>
        <begin position="11"/>
        <end position="31"/>
    </location>
</feature>
<feature type="topological domain" description="Periplasmic" evidence="1">
    <location>
        <begin position="32"/>
        <end position="52"/>
    </location>
</feature>
<feature type="transmembrane region" description="Helical" evidence="2">
    <location>
        <begin position="53"/>
        <end position="73"/>
    </location>
</feature>
<feature type="topological domain" description="Cytoplasmic" evidence="1">
    <location>
        <begin position="74"/>
        <end position="92"/>
    </location>
</feature>
<feature type="transmembrane region" description="Helical" evidence="2">
    <location>
        <begin position="93"/>
        <end position="113"/>
    </location>
</feature>
<feature type="topological domain" description="Periplasmic" evidence="1">
    <location>
        <begin position="114"/>
        <end position="126"/>
    </location>
</feature>
<feature type="transmembrane region" description="Helical" evidence="2">
    <location>
        <begin position="127"/>
        <end position="147"/>
    </location>
</feature>
<feature type="topological domain" description="Cytoplasmic" evidence="1">
    <location>
        <begin position="148"/>
        <end position="159"/>
    </location>
</feature>
<feature type="transmembrane region" description="Helical" evidence="2">
    <location>
        <begin position="160"/>
        <end position="180"/>
    </location>
</feature>
<feature type="topological domain" description="Periplasmic" evidence="1">
    <location>
        <begin position="181"/>
        <end position="188"/>
    </location>
</feature>
<feature type="transmembrane region" description="Helical" evidence="2">
    <location>
        <begin position="189"/>
        <end position="209"/>
    </location>
</feature>
<feature type="topological domain" description="Cytoplasmic" evidence="1">
    <location>
        <begin position="210"/>
        <end position="242"/>
    </location>
</feature>
<feature type="transmembrane region" description="Helical" evidence="2">
    <location>
        <begin position="243"/>
        <end position="263"/>
    </location>
</feature>
<feature type="topological domain" description="Periplasmic" evidence="1">
    <location>
        <begin position="264"/>
        <end position="275"/>
    </location>
</feature>
<feature type="transmembrane region" description="Helical" evidence="2">
    <location>
        <begin position="276"/>
        <end position="296"/>
    </location>
</feature>
<feature type="topological domain" description="Cytoplasmic" evidence="1">
    <location>
        <begin position="297"/>
        <end position="313"/>
    </location>
</feature>
<feature type="transmembrane region" description="Helical" evidence="2">
    <location>
        <begin position="314"/>
        <end position="334"/>
    </location>
</feature>
<feature type="topological domain" description="Periplasmic" evidence="1">
    <location>
        <begin position="335"/>
        <end position="349"/>
    </location>
</feature>
<feature type="transmembrane region" description="Helical" evidence="2">
    <location>
        <begin position="350"/>
        <end position="370"/>
    </location>
</feature>
<feature type="topological domain" description="Cytoplasmic" evidence="1">
    <location>
        <begin position="371"/>
        <end position="386"/>
    </location>
</feature>
<feature type="transmembrane region" description="Helical" evidence="2">
    <location>
        <begin position="387"/>
        <end position="407"/>
    </location>
</feature>
<feature type="topological domain" description="Periplasmic" evidence="1">
    <location>
        <begin position="408"/>
        <end position="417"/>
    </location>
</feature>
<feature type="transmembrane region" description="Helical" evidence="2">
    <location>
        <begin position="418"/>
        <end position="438"/>
    </location>
</feature>
<feature type="topological domain" description="Cytoplasmic" evidence="1">
    <location>
        <begin position="439"/>
        <end position="457"/>
    </location>
</feature>
<protein>
    <recommendedName>
        <fullName evidence="2">Multidrug resistance protein MdtK</fullName>
    </recommendedName>
    <alternativeName>
        <fullName evidence="2">Multidrug-efflux transporter</fullName>
    </alternativeName>
</protein>
<accession>Q0T4A9</accession>
<evidence type="ECO:0000255" key="1"/>
<evidence type="ECO:0000255" key="2">
    <source>
        <dbReference type="HAMAP-Rule" id="MF_00400"/>
    </source>
</evidence>
<name>MDTK_SHIF8</name>
<organism>
    <name type="scientific">Shigella flexneri serotype 5b (strain 8401)</name>
    <dbReference type="NCBI Taxonomy" id="373384"/>
    <lineage>
        <taxon>Bacteria</taxon>
        <taxon>Pseudomonadati</taxon>
        <taxon>Pseudomonadota</taxon>
        <taxon>Gammaproteobacteria</taxon>
        <taxon>Enterobacterales</taxon>
        <taxon>Enterobacteriaceae</taxon>
        <taxon>Shigella</taxon>
    </lineage>
</organism>
<dbReference type="EMBL" id="CP000266">
    <property type="protein sequence ID" value="ABF03856.1"/>
    <property type="molecule type" value="Genomic_DNA"/>
</dbReference>
<dbReference type="RefSeq" id="WP_001174966.1">
    <property type="nucleotide sequence ID" value="NC_008258.1"/>
</dbReference>
<dbReference type="SMR" id="Q0T4A9"/>
<dbReference type="KEGG" id="sfv:SFV_1685"/>
<dbReference type="HOGENOM" id="CLU_012893_6_0_6"/>
<dbReference type="Proteomes" id="UP000000659">
    <property type="component" value="Chromosome"/>
</dbReference>
<dbReference type="GO" id="GO:0005886">
    <property type="term" value="C:plasma membrane"/>
    <property type="evidence" value="ECO:0007669"/>
    <property type="project" value="UniProtKB-SubCell"/>
</dbReference>
<dbReference type="GO" id="GO:0015297">
    <property type="term" value="F:antiporter activity"/>
    <property type="evidence" value="ECO:0007669"/>
    <property type="project" value="UniProtKB-UniRule"/>
</dbReference>
<dbReference type="GO" id="GO:0042910">
    <property type="term" value="F:xenobiotic transmembrane transporter activity"/>
    <property type="evidence" value="ECO:0007669"/>
    <property type="project" value="UniProtKB-UniRule"/>
</dbReference>
<dbReference type="GO" id="GO:0006814">
    <property type="term" value="P:sodium ion transport"/>
    <property type="evidence" value="ECO:0007669"/>
    <property type="project" value="UniProtKB-UniRule"/>
</dbReference>
<dbReference type="GO" id="GO:0006855">
    <property type="term" value="P:xenobiotic transmembrane transport"/>
    <property type="evidence" value="ECO:0007669"/>
    <property type="project" value="UniProtKB-UniRule"/>
</dbReference>
<dbReference type="CDD" id="cd13131">
    <property type="entry name" value="MATE_NorM_like"/>
    <property type="match status" value="1"/>
</dbReference>
<dbReference type="HAMAP" id="MF_00400">
    <property type="entry name" value="MdtK"/>
    <property type="match status" value="1"/>
</dbReference>
<dbReference type="InterPro" id="IPR002528">
    <property type="entry name" value="MATE_fam"/>
</dbReference>
<dbReference type="InterPro" id="IPR050222">
    <property type="entry name" value="MATE_MdtK"/>
</dbReference>
<dbReference type="InterPro" id="IPR048279">
    <property type="entry name" value="MdtK-like"/>
</dbReference>
<dbReference type="InterPro" id="IPR022913">
    <property type="entry name" value="Multidrug-R_MdtK"/>
</dbReference>
<dbReference type="NCBIfam" id="TIGR00797">
    <property type="entry name" value="matE"/>
    <property type="match status" value="1"/>
</dbReference>
<dbReference type="PANTHER" id="PTHR43298:SF2">
    <property type="entry name" value="FMN_FAD EXPORTER YEEO-RELATED"/>
    <property type="match status" value="1"/>
</dbReference>
<dbReference type="PANTHER" id="PTHR43298">
    <property type="entry name" value="MULTIDRUG RESISTANCE PROTEIN NORM-RELATED"/>
    <property type="match status" value="1"/>
</dbReference>
<dbReference type="Pfam" id="PF01554">
    <property type="entry name" value="MatE"/>
    <property type="match status" value="2"/>
</dbReference>
<dbReference type="PIRSF" id="PIRSF006603">
    <property type="entry name" value="DinF"/>
    <property type="match status" value="1"/>
</dbReference>